<keyword id="KW-1015">Disulfide bond</keyword>
<keyword id="KW-0960">Knottin</keyword>
<keyword id="KW-0528">Neurotoxin</keyword>
<keyword id="KW-0964">Secreted</keyword>
<keyword id="KW-0732">Signal</keyword>
<keyword id="KW-0800">Toxin</keyword>
<organism>
    <name type="scientific">Conus ventricosus</name>
    <name type="common">Mediterranean cone</name>
    <dbReference type="NCBI Taxonomy" id="117992"/>
    <lineage>
        <taxon>Eukaryota</taxon>
        <taxon>Metazoa</taxon>
        <taxon>Spiralia</taxon>
        <taxon>Lophotrochozoa</taxon>
        <taxon>Mollusca</taxon>
        <taxon>Gastropoda</taxon>
        <taxon>Caenogastropoda</taxon>
        <taxon>Neogastropoda</taxon>
        <taxon>Conoidea</taxon>
        <taxon>Conidae</taxon>
        <taxon>Conus</taxon>
        <taxon>Lautoconus</taxon>
    </lineage>
</organism>
<evidence type="ECO:0000250" key="1"/>
<evidence type="ECO:0000255" key="2"/>
<evidence type="ECO:0000305" key="3"/>
<accession>Q9BPC5</accession>
<feature type="signal peptide" evidence="2">
    <location>
        <begin position="1"/>
        <end position="19"/>
    </location>
</feature>
<feature type="propeptide" id="PRO_0000404818" evidence="1">
    <location>
        <begin position="20"/>
        <end position="50"/>
    </location>
</feature>
<feature type="peptide" id="PRO_0000404819" description="Conotoxin VnMEKL-024">
    <location>
        <begin position="51"/>
        <end position="79"/>
    </location>
</feature>
<feature type="disulfide bond" evidence="1">
    <location>
        <begin position="51"/>
        <end position="65"/>
    </location>
</feature>
<feature type="disulfide bond" evidence="1">
    <location>
        <begin position="58"/>
        <end position="69"/>
    </location>
</feature>
<feature type="disulfide bond" evidence="1">
    <location>
        <begin position="64"/>
        <end position="76"/>
    </location>
</feature>
<name>O265_CONVE</name>
<protein>
    <recommendedName>
        <fullName>Conotoxin VnMEKL-024</fullName>
    </recommendedName>
</protein>
<proteinExistence type="evidence at transcript level"/>
<reference key="1">
    <citation type="journal article" date="2001" name="Mol. Biol. Evol.">
        <title>Mechanisms for evolving hypervariability: the case of conopeptides.</title>
        <authorList>
            <person name="Conticello S.G."/>
            <person name="Gilad Y."/>
            <person name="Avidan N."/>
            <person name="Ben-Asher E."/>
            <person name="Levy Z."/>
            <person name="Fainzilber M."/>
        </authorList>
    </citation>
    <scope>NUCLEOTIDE SEQUENCE [MRNA]</scope>
    <source>
        <tissue>Venom duct</tissue>
    </source>
</reference>
<sequence>MQKLTILLLVAAVLMSTQALIRGGVEKRQEAKRNFFSKRKTTAESWWEGECRTWYAPCNFPSQCCSEVCSSKTGRCLTW</sequence>
<comment type="subcellular location">
    <subcellularLocation>
        <location evidence="1">Secreted</location>
    </subcellularLocation>
</comment>
<comment type="tissue specificity">
    <text>Expressed by the venom duct.</text>
</comment>
<comment type="domain">
    <text evidence="1">The presence of a 'disulfide through disulfide knot' structurally defines this protein as a knottin.</text>
</comment>
<comment type="domain">
    <text>The cysteine framework is VI/VII (C-C-CC-C-C).</text>
</comment>
<comment type="similarity">
    <text evidence="3">Belongs to the conotoxin O2 superfamily.</text>
</comment>
<dbReference type="EMBL" id="AF215009">
    <property type="protein sequence ID" value="AAG60437.1"/>
    <property type="molecule type" value="mRNA"/>
</dbReference>
<dbReference type="SMR" id="Q9BPC5"/>
<dbReference type="ConoServer" id="696">
    <property type="toxin name" value="Vn6.5 precursor"/>
</dbReference>
<dbReference type="GO" id="GO:0005576">
    <property type="term" value="C:extracellular region"/>
    <property type="evidence" value="ECO:0007669"/>
    <property type="project" value="UniProtKB-SubCell"/>
</dbReference>
<dbReference type="GO" id="GO:0008200">
    <property type="term" value="F:ion channel inhibitor activity"/>
    <property type="evidence" value="ECO:0007669"/>
    <property type="project" value="InterPro"/>
</dbReference>
<dbReference type="GO" id="GO:0090729">
    <property type="term" value="F:toxin activity"/>
    <property type="evidence" value="ECO:0007669"/>
    <property type="project" value="UniProtKB-KW"/>
</dbReference>
<dbReference type="InterPro" id="IPR004214">
    <property type="entry name" value="Conotoxin"/>
</dbReference>
<dbReference type="Pfam" id="PF02950">
    <property type="entry name" value="Conotoxin"/>
    <property type="match status" value="1"/>
</dbReference>